<organism>
    <name type="scientific">Bordetella bronchiseptica (strain ATCC BAA-588 / NCTC 13252 / RB50)</name>
    <name type="common">Alcaligenes bronchisepticus</name>
    <dbReference type="NCBI Taxonomy" id="257310"/>
    <lineage>
        <taxon>Bacteria</taxon>
        <taxon>Pseudomonadati</taxon>
        <taxon>Pseudomonadota</taxon>
        <taxon>Betaproteobacteria</taxon>
        <taxon>Burkholderiales</taxon>
        <taxon>Alcaligenaceae</taxon>
        <taxon>Bordetella</taxon>
    </lineage>
</organism>
<gene>
    <name evidence="1" type="primary">groES</name>
    <name type="synonym">cpn10</name>
    <name evidence="1" type="synonym">groS</name>
    <name type="ordered locus">BB0963</name>
</gene>
<evidence type="ECO:0000255" key="1">
    <source>
        <dbReference type="HAMAP-Rule" id="MF_00580"/>
    </source>
</evidence>
<evidence type="ECO:0000305" key="2"/>
<name>CH10_BORBR</name>
<sequence>MALRPLHDRVIVKRLDNERKTASGIVIPDSAAEKPDQGEVVAVGPGKKTEDGKILPVDLKAGDKVLFGKYAGQTVKVDGEELLVIREDEILAVIQ</sequence>
<dbReference type="EMBL" id="BX640439">
    <property type="protein sequence ID" value="CAE31462.1"/>
    <property type="molecule type" value="Genomic_DNA"/>
</dbReference>
<dbReference type="RefSeq" id="WP_003808621.1">
    <property type="nucleotide sequence ID" value="NC_002927.3"/>
</dbReference>
<dbReference type="SMR" id="P0A340"/>
<dbReference type="GeneID" id="93202619"/>
<dbReference type="KEGG" id="bbr:BB0963"/>
<dbReference type="eggNOG" id="COG0234">
    <property type="taxonomic scope" value="Bacteria"/>
</dbReference>
<dbReference type="HOGENOM" id="CLU_132825_2_0_4"/>
<dbReference type="Proteomes" id="UP000001027">
    <property type="component" value="Chromosome"/>
</dbReference>
<dbReference type="GO" id="GO:0005737">
    <property type="term" value="C:cytoplasm"/>
    <property type="evidence" value="ECO:0007669"/>
    <property type="project" value="UniProtKB-SubCell"/>
</dbReference>
<dbReference type="GO" id="GO:0005524">
    <property type="term" value="F:ATP binding"/>
    <property type="evidence" value="ECO:0007669"/>
    <property type="project" value="InterPro"/>
</dbReference>
<dbReference type="GO" id="GO:0046872">
    <property type="term" value="F:metal ion binding"/>
    <property type="evidence" value="ECO:0007669"/>
    <property type="project" value="TreeGrafter"/>
</dbReference>
<dbReference type="GO" id="GO:0044183">
    <property type="term" value="F:protein folding chaperone"/>
    <property type="evidence" value="ECO:0007669"/>
    <property type="project" value="InterPro"/>
</dbReference>
<dbReference type="GO" id="GO:0051087">
    <property type="term" value="F:protein-folding chaperone binding"/>
    <property type="evidence" value="ECO:0007669"/>
    <property type="project" value="TreeGrafter"/>
</dbReference>
<dbReference type="GO" id="GO:0051082">
    <property type="term" value="F:unfolded protein binding"/>
    <property type="evidence" value="ECO:0007669"/>
    <property type="project" value="TreeGrafter"/>
</dbReference>
<dbReference type="GO" id="GO:0051085">
    <property type="term" value="P:chaperone cofactor-dependent protein refolding"/>
    <property type="evidence" value="ECO:0007669"/>
    <property type="project" value="TreeGrafter"/>
</dbReference>
<dbReference type="CDD" id="cd00320">
    <property type="entry name" value="cpn10"/>
    <property type="match status" value="1"/>
</dbReference>
<dbReference type="FunFam" id="2.30.33.40:FF:000001">
    <property type="entry name" value="10 kDa chaperonin"/>
    <property type="match status" value="1"/>
</dbReference>
<dbReference type="Gene3D" id="2.30.33.40">
    <property type="entry name" value="GroES chaperonin"/>
    <property type="match status" value="1"/>
</dbReference>
<dbReference type="HAMAP" id="MF_00580">
    <property type="entry name" value="CH10"/>
    <property type="match status" value="1"/>
</dbReference>
<dbReference type="InterPro" id="IPR020818">
    <property type="entry name" value="Chaperonin_GroES"/>
</dbReference>
<dbReference type="InterPro" id="IPR037124">
    <property type="entry name" value="Chaperonin_GroES_sf"/>
</dbReference>
<dbReference type="InterPro" id="IPR018369">
    <property type="entry name" value="Chaprnonin_Cpn10_CS"/>
</dbReference>
<dbReference type="InterPro" id="IPR011032">
    <property type="entry name" value="GroES-like_sf"/>
</dbReference>
<dbReference type="NCBIfam" id="NF001527">
    <property type="entry name" value="PRK00364.1-2"/>
    <property type="match status" value="1"/>
</dbReference>
<dbReference type="NCBIfam" id="NF001529">
    <property type="entry name" value="PRK00364.1-5"/>
    <property type="match status" value="1"/>
</dbReference>
<dbReference type="NCBIfam" id="NF001531">
    <property type="entry name" value="PRK00364.2-2"/>
    <property type="match status" value="1"/>
</dbReference>
<dbReference type="NCBIfam" id="NF001533">
    <property type="entry name" value="PRK00364.2-4"/>
    <property type="match status" value="1"/>
</dbReference>
<dbReference type="NCBIfam" id="NF001534">
    <property type="entry name" value="PRK00364.2-5"/>
    <property type="match status" value="1"/>
</dbReference>
<dbReference type="PANTHER" id="PTHR10772">
    <property type="entry name" value="10 KDA HEAT SHOCK PROTEIN"/>
    <property type="match status" value="1"/>
</dbReference>
<dbReference type="PANTHER" id="PTHR10772:SF58">
    <property type="entry name" value="CO-CHAPERONIN GROES"/>
    <property type="match status" value="1"/>
</dbReference>
<dbReference type="Pfam" id="PF00166">
    <property type="entry name" value="Cpn10"/>
    <property type="match status" value="1"/>
</dbReference>
<dbReference type="PRINTS" id="PR00297">
    <property type="entry name" value="CHAPERONIN10"/>
</dbReference>
<dbReference type="SMART" id="SM00883">
    <property type="entry name" value="Cpn10"/>
    <property type="match status" value="1"/>
</dbReference>
<dbReference type="SUPFAM" id="SSF50129">
    <property type="entry name" value="GroES-like"/>
    <property type="match status" value="1"/>
</dbReference>
<dbReference type="PROSITE" id="PS00681">
    <property type="entry name" value="CHAPERONINS_CPN10"/>
    <property type="match status" value="1"/>
</dbReference>
<reference key="1">
    <citation type="journal article" date="2003" name="Nat. Genet.">
        <title>Comparative analysis of the genome sequences of Bordetella pertussis, Bordetella parapertussis and Bordetella bronchiseptica.</title>
        <authorList>
            <person name="Parkhill J."/>
            <person name="Sebaihia M."/>
            <person name="Preston A."/>
            <person name="Murphy L.D."/>
            <person name="Thomson N.R."/>
            <person name="Harris D.E."/>
            <person name="Holden M.T.G."/>
            <person name="Churcher C.M."/>
            <person name="Bentley S.D."/>
            <person name="Mungall K.L."/>
            <person name="Cerdeno-Tarraga A.-M."/>
            <person name="Temple L."/>
            <person name="James K.D."/>
            <person name="Harris B."/>
            <person name="Quail M.A."/>
            <person name="Achtman M."/>
            <person name="Atkin R."/>
            <person name="Baker S."/>
            <person name="Basham D."/>
            <person name="Bason N."/>
            <person name="Cherevach I."/>
            <person name="Chillingworth T."/>
            <person name="Collins M."/>
            <person name="Cronin A."/>
            <person name="Davis P."/>
            <person name="Doggett J."/>
            <person name="Feltwell T."/>
            <person name="Goble A."/>
            <person name="Hamlin N."/>
            <person name="Hauser H."/>
            <person name="Holroyd S."/>
            <person name="Jagels K."/>
            <person name="Leather S."/>
            <person name="Moule S."/>
            <person name="Norberczak H."/>
            <person name="O'Neil S."/>
            <person name="Ormond D."/>
            <person name="Price C."/>
            <person name="Rabbinowitsch E."/>
            <person name="Rutter S."/>
            <person name="Sanders M."/>
            <person name="Saunders D."/>
            <person name="Seeger K."/>
            <person name="Sharp S."/>
            <person name="Simmonds M."/>
            <person name="Skelton J."/>
            <person name="Squares R."/>
            <person name="Squares S."/>
            <person name="Stevens K."/>
            <person name="Unwin L."/>
            <person name="Whitehead S."/>
            <person name="Barrell B.G."/>
            <person name="Maskell D.J."/>
        </authorList>
    </citation>
    <scope>NUCLEOTIDE SEQUENCE [LARGE SCALE GENOMIC DNA]</scope>
    <source>
        <strain>ATCC BAA-588 / NCTC 13252 / RB50</strain>
    </source>
</reference>
<protein>
    <recommendedName>
        <fullName evidence="1">Co-chaperonin GroES</fullName>
    </recommendedName>
    <alternativeName>
        <fullName evidence="1">10 kDa chaperonin</fullName>
    </alternativeName>
    <alternativeName>
        <fullName evidence="1">Chaperonin-10</fullName>
        <shortName evidence="1">Cpn10</shortName>
    </alternativeName>
</protein>
<accession>P0A340</accession>
<accession>P48221</accession>
<keyword id="KW-0143">Chaperone</keyword>
<keyword id="KW-0963">Cytoplasm</keyword>
<proteinExistence type="inferred from homology"/>
<comment type="function">
    <text evidence="1">Together with the chaperonin GroEL, plays an essential role in assisting protein folding. The GroEL-GroES system forms a nano-cage that allows encapsulation of the non-native substrate proteins and provides a physical environment optimized to promote and accelerate protein folding. GroES binds to the apical surface of the GroEL ring, thereby capping the opening of the GroEL channel.</text>
</comment>
<comment type="subunit">
    <text evidence="1">Heptamer of 7 subunits arranged in a ring. Interacts with the chaperonin GroEL.</text>
</comment>
<comment type="subcellular location">
    <subcellularLocation>
        <location evidence="1">Cytoplasm</location>
    </subcellularLocation>
</comment>
<comment type="similarity">
    <text evidence="1 2">Belongs to the GroES chaperonin family.</text>
</comment>
<feature type="chain" id="PRO_0000174702" description="Co-chaperonin GroES">
    <location>
        <begin position="1"/>
        <end position="95"/>
    </location>
</feature>